<dbReference type="EMBL" id="U10927">
    <property type="protein sequence ID" value="AAA64650.1"/>
    <property type="molecule type" value="Genomic_DNA"/>
</dbReference>
<dbReference type="SMR" id="P39860"/>
<dbReference type="UniPathway" id="UPA00934"/>
<dbReference type="GO" id="GO:0045227">
    <property type="term" value="P:capsule polysaccharide biosynthetic process"/>
    <property type="evidence" value="ECO:0007669"/>
    <property type="project" value="UniProtKB-UniPathway"/>
</dbReference>
<dbReference type="Gene3D" id="3.40.50.12780">
    <property type="entry name" value="N-terminal domain of ligase-like"/>
    <property type="match status" value="1"/>
</dbReference>
<dbReference type="InterPro" id="IPR042099">
    <property type="entry name" value="ANL_N_sf"/>
</dbReference>
<dbReference type="InterPro" id="IPR053158">
    <property type="entry name" value="CapK_Type1_Caps_Biosynth"/>
</dbReference>
<dbReference type="PANTHER" id="PTHR36932">
    <property type="entry name" value="CAPSULAR POLYSACCHARIDE BIOSYNTHESIS PROTEIN"/>
    <property type="match status" value="1"/>
</dbReference>
<dbReference type="PANTHER" id="PTHR36932:SF1">
    <property type="entry name" value="CAPSULAR POLYSACCHARIDE BIOSYNTHESIS PROTEIN"/>
    <property type="match status" value="1"/>
</dbReference>
<reference key="1">
    <citation type="journal article" date="1994" name="J. Bacteriol.">
        <title>Sequence analysis and molecular characterization of genes required for the biosynthesis of type 1 capsular polysaccharide in Staphylococcus aureus.</title>
        <authorList>
            <person name="Lin W.S."/>
            <person name="Cunneen T."/>
            <person name="Lee C.Y."/>
        </authorList>
    </citation>
    <scope>NUCLEOTIDE SEQUENCE [GENOMIC DNA]</scope>
    <source>
        <strain>ATCC 49951 / M / NCTC 10649</strain>
    </source>
</reference>
<comment type="function">
    <text>Required for the biosynthesis of type 1 capsular polysaccharide.</text>
</comment>
<comment type="pathway">
    <text>Capsule biogenesis; capsule polysaccharide biosynthesis.</text>
</comment>
<keyword id="KW-0972">Capsule biogenesis/degradation</keyword>
<keyword id="KW-0270">Exopolysaccharide synthesis</keyword>
<accession>P39860</accession>
<protein>
    <recommendedName>
        <fullName>Protein CapK</fullName>
    </recommendedName>
</protein>
<gene>
    <name type="primary">capK</name>
</gene>
<proteinExistence type="predicted"/>
<organism>
    <name type="scientific">Staphylococcus aureus</name>
    <dbReference type="NCBI Taxonomy" id="1280"/>
    <lineage>
        <taxon>Bacteria</taxon>
        <taxon>Bacillati</taxon>
        <taxon>Bacillota</taxon>
        <taxon>Bacilli</taxon>
        <taxon>Bacillales</taxon>
        <taxon>Staphylococcaceae</taxon>
        <taxon>Staphylococcus</taxon>
    </lineage>
</organism>
<name>CAPK_STAAU</name>
<feature type="chain" id="PRO_0000089314" description="Protein CapK">
    <location>
        <begin position="1"/>
        <end position="449"/>
    </location>
</feature>
<sequence length="449" mass="52511">MLNYIYNHSPIIFQNLMVSIKGKIFMKQRYTKHYYEEIKRLRECNDLFELQNQRFEEFYNYIKKNSEFYSEIIKKNNLSGKKITVANINQLPEITKDDIRKNVDKIITKKKNKLIKMGTGGSTGKSMVFYTNAYDMSRKIAYLDYFKEQHGVYKGMKRVSVGGRKIVPIKQKKKVFWRYNKPLNQLMISAYHADGENLKYYIKKLNKFQPETLDGYTTVIHRIARYILDNNIELSFTPIAIFPNAETLTDLMRDDIEKAFNCPVRNQYASSEGAPFITENKEGELEINVATGVFECKQIHGNIYELIVTGFYTTTTPLLRYKIGDSVELENELPVNYQQKDIKIKRIIGRNNDFLQSREKGIVTNVNLSTAIRFVENDVIESQFVQNDIDNIIVYLVISNDADKNNIIKKLKYELKFRFGTNTNFHFEFVNKIPSTPGGKKRFAINNIK</sequence>